<comment type="function">
    <text evidence="1">Catalyzes the strictly specific dephosphorylation of 2'-deoxyribonucleoside 5'-monophosphates.</text>
</comment>
<comment type="catalytic activity">
    <reaction evidence="1">
        <text>a 2'-deoxyribonucleoside 5'-phosphate + H2O = a 2'-deoxyribonucleoside + phosphate</text>
        <dbReference type="Rhea" id="RHEA:36167"/>
        <dbReference type="ChEBI" id="CHEBI:15377"/>
        <dbReference type="ChEBI" id="CHEBI:18274"/>
        <dbReference type="ChEBI" id="CHEBI:43474"/>
        <dbReference type="ChEBI" id="CHEBI:65317"/>
        <dbReference type="EC" id="3.1.3.89"/>
    </reaction>
</comment>
<comment type="cofactor">
    <cofactor evidence="1">
        <name>a divalent metal cation</name>
        <dbReference type="ChEBI" id="CHEBI:60240"/>
    </cofactor>
</comment>
<comment type="subunit">
    <text evidence="1">Homodimer.</text>
</comment>
<comment type="subcellular location">
    <subcellularLocation>
        <location evidence="1">Cytoplasm</location>
    </subcellularLocation>
</comment>
<comment type="similarity">
    <text evidence="1">Belongs to the 5DNU family.</text>
</comment>
<evidence type="ECO:0000255" key="1">
    <source>
        <dbReference type="HAMAP-Rule" id="MF_01100"/>
    </source>
</evidence>
<evidence type="ECO:0000255" key="2">
    <source>
        <dbReference type="PROSITE-ProRule" id="PRU01175"/>
    </source>
</evidence>
<proteinExistence type="inferred from homology"/>
<feature type="chain" id="PRO_1000136961" description="5'-deoxynucleotidase YfbR">
    <location>
        <begin position="1"/>
        <end position="199"/>
    </location>
</feature>
<feature type="domain" description="HD" evidence="2">
    <location>
        <begin position="30"/>
        <end position="142"/>
    </location>
</feature>
<feature type="binding site" evidence="1">
    <location>
        <begin position="18"/>
        <end position="19"/>
    </location>
    <ligand>
        <name>substrate</name>
    </ligand>
</feature>
<feature type="binding site" evidence="1">
    <location>
        <position position="33"/>
    </location>
    <ligand>
        <name>a divalent metal cation</name>
        <dbReference type="ChEBI" id="CHEBI:60240"/>
    </ligand>
</feature>
<feature type="binding site" evidence="1">
    <location>
        <position position="33"/>
    </location>
    <ligand>
        <name>substrate</name>
    </ligand>
</feature>
<feature type="binding site" evidence="1">
    <location>
        <position position="68"/>
    </location>
    <ligand>
        <name>a divalent metal cation</name>
        <dbReference type="ChEBI" id="CHEBI:60240"/>
    </ligand>
</feature>
<feature type="binding site" evidence="1">
    <location>
        <position position="69"/>
    </location>
    <ligand>
        <name>a divalent metal cation</name>
        <dbReference type="ChEBI" id="CHEBI:60240"/>
    </ligand>
</feature>
<feature type="binding site" evidence="1">
    <location>
        <position position="69"/>
    </location>
    <ligand>
        <name>substrate</name>
    </ligand>
</feature>
<feature type="binding site" evidence="1">
    <location>
        <begin position="77"/>
        <end position="80"/>
    </location>
    <ligand>
        <name>substrate</name>
    </ligand>
</feature>
<feature type="binding site" evidence="1">
    <location>
        <position position="137"/>
    </location>
    <ligand>
        <name>a divalent metal cation</name>
        <dbReference type="ChEBI" id="CHEBI:60240"/>
    </ligand>
</feature>
<feature type="binding site" evidence="1">
    <location>
        <position position="137"/>
    </location>
    <ligand>
        <name>substrate</name>
    </ligand>
</feature>
<feature type="site" description="Appears to be important in orienting the phosphate for catalysis" evidence="1">
    <location>
        <position position="18"/>
    </location>
</feature>
<accession>B7MG55</accession>
<gene>
    <name evidence="1" type="primary">yfbR</name>
    <name type="ordered locus">ECS88_2438</name>
</gene>
<name>5DNU_ECO45</name>
<reference key="1">
    <citation type="journal article" date="2009" name="PLoS Genet.">
        <title>Organised genome dynamics in the Escherichia coli species results in highly diverse adaptive paths.</title>
        <authorList>
            <person name="Touchon M."/>
            <person name="Hoede C."/>
            <person name="Tenaillon O."/>
            <person name="Barbe V."/>
            <person name="Baeriswyl S."/>
            <person name="Bidet P."/>
            <person name="Bingen E."/>
            <person name="Bonacorsi S."/>
            <person name="Bouchier C."/>
            <person name="Bouvet O."/>
            <person name="Calteau A."/>
            <person name="Chiapello H."/>
            <person name="Clermont O."/>
            <person name="Cruveiller S."/>
            <person name="Danchin A."/>
            <person name="Diard M."/>
            <person name="Dossat C."/>
            <person name="Karoui M.E."/>
            <person name="Frapy E."/>
            <person name="Garry L."/>
            <person name="Ghigo J.M."/>
            <person name="Gilles A.M."/>
            <person name="Johnson J."/>
            <person name="Le Bouguenec C."/>
            <person name="Lescat M."/>
            <person name="Mangenot S."/>
            <person name="Martinez-Jehanne V."/>
            <person name="Matic I."/>
            <person name="Nassif X."/>
            <person name="Oztas S."/>
            <person name="Petit M.A."/>
            <person name="Pichon C."/>
            <person name="Rouy Z."/>
            <person name="Ruf C.S."/>
            <person name="Schneider D."/>
            <person name="Tourret J."/>
            <person name="Vacherie B."/>
            <person name="Vallenet D."/>
            <person name="Medigue C."/>
            <person name="Rocha E.P.C."/>
            <person name="Denamur E."/>
        </authorList>
    </citation>
    <scope>NUCLEOTIDE SEQUENCE [LARGE SCALE GENOMIC DNA]</scope>
    <source>
        <strain>S88 / ExPEC</strain>
    </source>
</reference>
<protein>
    <recommendedName>
        <fullName evidence="1">5'-deoxynucleotidase YfbR</fullName>
        <ecNumber evidence="1">3.1.3.89</ecNumber>
    </recommendedName>
    <alternativeName>
        <fullName evidence="1">5'-deoxyribonucleotidase</fullName>
    </alternativeName>
    <alternativeName>
        <fullName evidence="1">Nucleoside 5'-monophosphate phosphohydrolase</fullName>
    </alternativeName>
</protein>
<organism>
    <name type="scientific">Escherichia coli O45:K1 (strain S88 / ExPEC)</name>
    <dbReference type="NCBI Taxonomy" id="585035"/>
    <lineage>
        <taxon>Bacteria</taxon>
        <taxon>Pseudomonadati</taxon>
        <taxon>Pseudomonadota</taxon>
        <taxon>Gammaproteobacteria</taxon>
        <taxon>Enterobacterales</taxon>
        <taxon>Enterobacteriaceae</taxon>
        <taxon>Escherichia</taxon>
    </lineage>
</organism>
<dbReference type="EC" id="3.1.3.89" evidence="1"/>
<dbReference type="EMBL" id="CU928161">
    <property type="protein sequence ID" value="CAR03717.1"/>
    <property type="molecule type" value="Genomic_DNA"/>
</dbReference>
<dbReference type="RefSeq" id="WP_000813854.1">
    <property type="nucleotide sequence ID" value="NC_011742.1"/>
</dbReference>
<dbReference type="SMR" id="B7MG55"/>
<dbReference type="KEGG" id="ecz:ECS88_2438"/>
<dbReference type="HOGENOM" id="CLU_084784_0_0_6"/>
<dbReference type="Proteomes" id="UP000000747">
    <property type="component" value="Chromosome"/>
</dbReference>
<dbReference type="GO" id="GO:0005737">
    <property type="term" value="C:cytoplasm"/>
    <property type="evidence" value="ECO:0007669"/>
    <property type="project" value="UniProtKB-SubCell"/>
</dbReference>
<dbReference type="GO" id="GO:0002953">
    <property type="term" value="F:5'-deoxynucleotidase activity"/>
    <property type="evidence" value="ECO:0007669"/>
    <property type="project" value="UniProtKB-EC"/>
</dbReference>
<dbReference type="GO" id="GO:0046872">
    <property type="term" value="F:metal ion binding"/>
    <property type="evidence" value="ECO:0007669"/>
    <property type="project" value="UniProtKB-KW"/>
</dbReference>
<dbReference type="GO" id="GO:0000166">
    <property type="term" value="F:nucleotide binding"/>
    <property type="evidence" value="ECO:0007669"/>
    <property type="project" value="UniProtKB-KW"/>
</dbReference>
<dbReference type="CDD" id="cd00077">
    <property type="entry name" value="HDc"/>
    <property type="match status" value="1"/>
</dbReference>
<dbReference type="FunFam" id="1.10.3210.10:FF:000002">
    <property type="entry name" value="Nucleotidase YfbR"/>
    <property type="match status" value="1"/>
</dbReference>
<dbReference type="Gene3D" id="1.10.3210.10">
    <property type="entry name" value="Hypothetical protein af1432"/>
    <property type="match status" value="1"/>
</dbReference>
<dbReference type="HAMAP" id="MF_01100">
    <property type="entry name" value="5DNU"/>
    <property type="match status" value="1"/>
</dbReference>
<dbReference type="InterPro" id="IPR003607">
    <property type="entry name" value="HD/PDEase_dom"/>
</dbReference>
<dbReference type="InterPro" id="IPR006674">
    <property type="entry name" value="HD_domain"/>
</dbReference>
<dbReference type="InterPro" id="IPR022971">
    <property type="entry name" value="YfbR"/>
</dbReference>
<dbReference type="InterPro" id="IPR039356">
    <property type="entry name" value="YfbR/HDDC2"/>
</dbReference>
<dbReference type="NCBIfam" id="NF003009">
    <property type="entry name" value="PRK03826.1"/>
    <property type="match status" value="1"/>
</dbReference>
<dbReference type="PANTHER" id="PTHR11845">
    <property type="entry name" value="5'-DEOXYNUCLEOTIDASE HDDC2"/>
    <property type="match status" value="1"/>
</dbReference>
<dbReference type="PANTHER" id="PTHR11845:SF13">
    <property type="entry name" value="5'-DEOXYNUCLEOTIDASE HDDC2"/>
    <property type="match status" value="1"/>
</dbReference>
<dbReference type="Pfam" id="PF12917">
    <property type="entry name" value="YfbR-like"/>
    <property type="match status" value="1"/>
</dbReference>
<dbReference type="SMART" id="SM00471">
    <property type="entry name" value="HDc"/>
    <property type="match status" value="1"/>
</dbReference>
<dbReference type="SUPFAM" id="SSF109604">
    <property type="entry name" value="HD-domain/PDEase-like"/>
    <property type="match status" value="1"/>
</dbReference>
<dbReference type="PROSITE" id="PS51831">
    <property type="entry name" value="HD"/>
    <property type="match status" value="1"/>
</dbReference>
<keyword id="KW-0963">Cytoplasm</keyword>
<keyword id="KW-0378">Hydrolase</keyword>
<keyword id="KW-0479">Metal-binding</keyword>
<keyword id="KW-0547">Nucleotide-binding</keyword>
<keyword id="KW-1185">Reference proteome</keyword>
<sequence>MKQSHFFAHLSRLKLINRWPLMRNVRTENVSEHSLQVAMVAHALAAIKNRKFGGNVNAERIALLAMYHDASEVLTGDLPTPVKYFNSQIAQEYKAIEKIAQQKLVDMVPEELQDIFAPLIDEHAYSDEEKSLVKQADALCAYLKCLEELAAGNNEFLLAKTRLEATLEARRSQEMDYFMEVFVPSFHLSLDEISQDSPL</sequence>